<organism>
    <name type="scientific">Pongo abelii</name>
    <name type="common">Sumatran orangutan</name>
    <name type="synonym">Pongo pygmaeus abelii</name>
    <dbReference type="NCBI Taxonomy" id="9601"/>
    <lineage>
        <taxon>Eukaryota</taxon>
        <taxon>Metazoa</taxon>
        <taxon>Chordata</taxon>
        <taxon>Craniata</taxon>
        <taxon>Vertebrata</taxon>
        <taxon>Euteleostomi</taxon>
        <taxon>Mammalia</taxon>
        <taxon>Eutheria</taxon>
        <taxon>Euarchontoglires</taxon>
        <taxon>Primates</taxon>
        <taxon>Haplorrhini</taxon>
        <taxon>Catarrhini</taxon>
        <taxon>Hominidae</taxon>
        <taxon>Pongo</taxon>
    </lineage>
</organism>
<name>BODG_PONAB</name>
<feature type="chain" id="PRO_0000260155" description="Gamma-butyrobetaine dioxygenase">
    <location>
        <begin position="1"/>
        <end position="387"/>
    </location>
</feature>
<feature type="binding site" evidence="1">
    <location>
        <position position="38"/>
    </location>
    <ligand>
        <name>Zn(2+)</name>
        <dbReference type="ChEBI" id="CHEBI:29105"/>
    </ligand>
</feature>
<feature type="binding site" evidence="1">
    <location>
        <position position="40"/>
    </location>
    <ligand>
        <name>Zn(2+)</name>
        <dbReference type="ChEBI" id="CHEBI:29105"/>
    </ligand>
</feature>
<feature type="binding site" evidence="1">
    <location>
        <position position="43"/>
    </location>
    <ligand>
        <name>Zn(2+)</name>
        <dbReference type="ChEBI" id="CHEBI:29105"/>
    </ligand>
</feature>
<feature type="binding site" evidence="1">
    <location>
        <position position="82"/>
    </location>
    <ligand>
        <name>Zn(2+)</name>
        <dbReference type="ChEBI" id="CHEBI:29105"/>
    </ligand>
</feature>
<feature type="binding site" evidence="1">
    <location>
        <position position="202"/>
    </location>
    <ligand>
        <name>Fe cation</name>
        <dbReference type="ChEBI" id="CHEBI:24875"/>
        <note>catalytic</note>
    </ligand>
</feature>
<feature type="binding site" evidence="1">
    <location>
        <position position="204"/>
    </location>
    <ligand>
        <name>Fe cation</name>
        <dbReference type="ChEBI" id="CHEBI:24875"/>
        <note>catalytic</note>
    </ligand>
</feature>
<feature type="binding site" evidence="1">
    <location>
        <position position="347"/>
    </location>
    <ligand>
        <name>Fe cation</name>
        <dbReference type="ChEBI" id="CHEBI:24875"/>
        <note>catalytic</note>
    </ligand>
</feature>
<feature type="modified residue" description="Phosphoserine" evidence="2">
    <location>
        <position position="351"/>
    </location>
</feature>
<comment type="function">
    <text evidence="1">Catalyzes the formation of L-carnitine from gamma-butyrobetaine.</text>
</comment>
<comment type="catalytic activity">
    <reaction>
        <text>4-(trimethylamino)butanoate + 2-oxoglutarate + O2 = carnitine + succinate + CO2</text>
        <dbReference type="Rhea" id="RHEA:24028"/>
        <dbReference type="ChEBI" id="CHEBI:15379"/>
        <dbReference type="ChEBI" id="CHEBI:16244"/>
        <dbReference type="ChEBI" id="CHEBI:16526"/>
        <dbReference type="ChEBI" id="CHEBI:16810"/>
        <dbReference type="ChEBI" id="CHEBI:17126"/>
        <dbReference type="ChEBI" id="CHEBI:30031"/>
        <dbReference type="EC" id="1.14.11.1"/>
    </reaction>
</comment>
<comment type="cofactor">
    <cofactor evidence="1">
        <name>Fe(2+)</name>
        <dbReference type="ChEBI" id="CHEBI:29033"/>
    </cofactor>
    <text evidence="1">Binds 1 Fe(2+) ion per subunit.</text>
</comment>
<comment type="cofactor">
    <cofactor evidence="1">
        <name>L-ascorbate</name>
        <dbReference type="ChEBI" id="CHEBI:38290"/>
    </cofactor>
</comment>
<comment type="pathway">
    <text>Amine and polyamine biosynthesis; carnitine biosynthesis.</text>
</comment>
<comment type="subcellular location">
    <subcellularLocation>
        <location evidence="1">Cytoplasm</location>
    </subcellularLocation>
</comment>
<comment type="similarity">
    <text evidence="3">Belongs to the gamma-BBH/TMLD family.</text>
</comment>
<sequence>MACTIQKAEALDGARLMQILWYDEEESLYPAVWLRDNCPCSDCYLDSAKARKLLAEALDVNIGIKGLTFDRKKVYITWPDEHYSEFQADWLKKRCLSKQARAKLQRELFFPECQYWGSELQLPTLDFEDVLRYDEHAYKWLSTLKKVGIVRLTGASDKPGEVSKLGKRMGFLYLTFYGHTWQVQDKIDANNVAYTTGKLSFHTDYPALHHPPGVQLLHCIKQTVTGGDSEIVDGFNVCQKLKKNNPQAFQILSSTFVDFTDIGVDYCDFSVQSKHKIIELDDKGQVVRINFNNATRDTIFDVPVERVQPFYAALKEFVDLMNSKESKFTFKMNPGDVITFDNWRLLHGRRSYEAGTEISRHLEGAYADWDVVMSRLRILRQRVENGN</sequence>
<proteinExistence type="evidence at transcript level"/>
<accession>Q5R5D8</accession>
<gene>
    <name type="primary">BBOX1</name>
</gene>
<protein>
    <recommendedName>
        <fullName>Gamma-butyrobetaine dioxygenase</fullName>
        <ecNumber>1.14.11.1</ecNumber>
    </recommendedName>
    <alternativeName>
        <fullName>Gamma-butyrobetaine hydroxylase</fullName>
        <shortName>Gamma-BBH</shortName>
    </alternativeName>
    <alternativeName>
        <fullName>Gamma-butyrobetaine,2-oxoglutarate dioxygenase</fullName>
    </alternativeName>
</protein>
<dbReference type="EC" id="1.14.11.1"/>
<dbReference type="EMBL" id="CR860924">
    <property type="protein sequence ID" value="CAH93028.1"/>
    <property type="molecule type" value="mRNA"/>
</dbReference>
<dbReference type="RefSeq" id="NP_001126790.1">
    <property type="nucleotide sequence ID" value="NM_001133318.1"/>
</dbReference>
<dbReference type="SMR" id="Q5R5D8"/>
<dbReference type="STRING" id="9601.ENSPPYP00000003911"/>
<dbReference type="GeneID" id="100173794"/>
<dbReference type="KEGG" id="pon:100173794"/>
<dbReference type="CTD" id="8424"/>
<dbReference type="eggNOG" id="KOG3888">
    <property type="taxonomic scope" value="Eukaryota"/>
</dbReference>
<dbReference type="InParanoid" id="Q5R5D8"/>
<dbReference type="OrthoDB" id="406634at2759"/>
<dbReference type="UniPathway" id="UPA00118"/>
<dbReference type="Proteomes" id="UP000001595">
    <property type="component" value="Unplaced"/>
</dbReference>
<dbReference type="GO" id="GO:0005739">
    <property type="term" value="C:mitochondrion"/>
    <property type="evidence" value="ECO:0007669"/>
    <property type="project" value="TreeGrafter"/>
</dbReference>
<dbReference type="GO" id="GO:0008336">
    <property type="term" value="F:gamma-butyrobetaine dioxygenase activity"/>
    <property type="evidence" value="ECO:0000250"/>
    <property type="project" value="UniProtKB"/>
</dbReference>
<dbReference type="GO" id="GO:0005506">
    <property type="term" value="F:iron ion binding"/>
    <property type="evidence" value="ECO:0007669"/>
    <property type="project" value="InterPro"/>
</dbReference>
<dbReference type="GO" id="GO:0008270">
    <property type="term" value="F:zinc ion binding"/>
    <property type="evidence" value="ECO:0000250"/>
    <property type="project" value="UniProtKB"/>
</dbReference>
<dbReference type="GO" id="GO:0045329">
    <property type="term" value="P:carnitine biosynthetic process"/>
    <property type="evidence" value="ECO:0000250"/>
    <property type="project" value="UniProtKB"/>
</dbReference>
<dbReference type="CDD" id="cd00250">
    <property type="entry name" value="CAS_like"/>
    <property type="match status" value="1"/>
</dbReference>
<dbReference type="FunFam" id="3.60.130.10:FF:000015">
    <property type="entry name" value="Gamma-butyrobetaine dioxygenase"/>
    <property type="match status" value="1"/>
</dbReference>
<dbReference type="FunFam" id="3.30.2020.30:FF:000002">
    <property type="entry name" value="Putative gamma-butyrobetaine dioxygenase"/>
    <property type="match status" value="1"/>
</dbReference>
<dbReference type="Gene3D" id="3.30.2020.30">
    <property type="match status" value="1"/>
</dbReference>
<dbReference type="Gene3D" id="3.60.130.10">
    <property type="entry name" value="Clavaminate synthase-like"/>
    <property type="match status" value="1"/>
</dbReference>
<dbReference type="InterPro" id="IPR050411">
    <property type="entry name" value="AlphaKG_dependent_hydroxylases"/>
</dbReference>
<dbReference type="InterPro" id="IPR012775">
    <property type="entry name" value="GBBH-like"/>
</dbReference>
<dbReference type="InterPro" id="IPR010376">
    <property type="entry name" value="GBBH-like_N"/>
</dbReference>
<dbReference type="InterPro" id="IPR038492">
    <property type="entry name" value="GBBH-like_N_sf"/>
</dbReference>
<dbReference type="InterPro" id="IPR042098">
    <property type="entry name" value="TauD-like_sf"/>
</dbReference>
<dbReference type="InterPro" id="IPR003819">
    <property type="entry name" value="TauD/TfdA-like"/>
</dbReference>
<dbReference type="NCBIfam" id="TIGR02409">
    <property type="entry name" value="carnitine_bodg"/>
    <property type="match status" value="1"/>
</dbReference>
<dbReference type="PANTHER" id="PTHR10696:SF33">
    <property type="entry name" value="GAMMA-BUTYROBETAINE DIOXYGENASE"/>
    <property type="match status" value="1"/>
</dbReference>
<dbReference type="PANTHER" id="PTHR10696">
    <property type="entry name" value="GAMMA-BUTYROBETAINE HYDROXYLASE-RELATED"/>
    <property type="match status" value="1"/>
</dbReference>
<dbReference type="Pfam" id="PF06155">
    <property type="entry name" value="GBBH-like_N"/>
    <property type="match status" value="1"/>
</dbReference>
<dbReference type="Pfam" id="PF02668">
    <property type="entry name" value="TauD"/>
    <property type="match status" value="1"/>
</dbReference>
<dbReference type="SUPFAM" id="SSF51197">
    <property type="entry name" value="Clavaminate synthase-like"/>
    <property type="match status" value="1"/>
</dbReference>
<reference key="1">
    <citation type="submission" date="2004-11" db="EMBL/GenBank/DDBJ databases">
        <authorList>
            <consortium name="The German cDNA consortium"/>
        </authorList>
    </citation>
    <scope>NUCLEOTIDE SEQUENCE [LARGE SCALE MRNA]</scope>
    <source>
        <tissue>Kidney</tissue>
    </source>
</reference>
<keyword id="KW-0124">Carnitine biosynthesis</keyword>
<keyword id="KW-0963">Cytoplasm</keyword>
<keyword id="KW-0223">Dioxygenase</keyword>
<keyword id="KW-0408">Iron</keyword>
<keyword id="KW-0479">Metal-binding</keyword>
<keyword id="KW-0560">Oxidoreductase</keyword>
<keyword id="KW-0597">Phosphoprotein</keyword>
<keyword id="KW-1185">Reference proteome</keyword>
<keyword id="KW-0862">Zinc</keyword>
<evidence type="ECO:0000250" key="1"/>
<evidence type="ECO:0000250" key="2">
    <source>
        <dbReference type="UniProtKB" id="Q9QZU7"/>
    </source>
</evidence>
<evidence type="ECO:0000305" key="3"/>